<proteinExistence type="evidence at protein level"/>
<protein>
    <recommendedName>
        <fullName evidence="6">Gamma-conotoxin-like TxVIIA</fullName>
    </recommendedName>
    <alternativeName>
        <fullName evidence="5">TxIIA</fullName>
    </alternativeName>
</protein>
<comment type="function">
    <text evidence="1">Gamma-conotoxins may act on voltage-gated non-specific cation pacemaker channels (HCN) (By similarity). Potent neurotoxin.</text>
</comment>
<comment type="subcellular location">
    <subcellularLocation>
        <location evidence="3">Secreted</location>
    </subcellularLocation>
</comment>
<comment type="tissue specificity">
    <text evidence="8">Expressed by the venom duct.</text>
</comment>
<comment type="domain">
    <text evidence="1">The presence of a 'disulfide through disulfide knot' structurally defines this protein as a knottin.</text>
</comment>
<comment type="domain">
    <text evidence="7">The cysteine framework is VI/VII (C-C-CC-C-C).</text>
</comment>
<comment type="mass spectrometry"/>
<comment type="similarity">
    <text evidence="7">Belongs to the conotoxin O2 superfamily.</text>
</comment>
<feature type="signal peptide" evidence="2">
    <location>
        <begin position="1"/>
        <end position="19"/>
    </location>
</feature>
<feature type="propeptide" id="PRO_0000392713" evidence="3">
    <location>
        <begin position="20"/>
        <end position="46"/>
    </location>
</feature>
<feature type="peptide" id="PRO_0000044485" description="Gamma-conotoxin-like TxVIIA" evidence="3">
    <location>
        <begin position="49"/>
        <end position="75"/>
    </location>
</feature>
<feature type="modified residue" description="4-carboxyglutamate" evidence="3">
    <location>
        <position position="57"/>
    </location>
</feature>
<feature type="modified residue" description="4-carboxyglutamate" evidence="3">
    <location>
        <position position="61"/>
    </location>
</feature>
<feature type="modified residue" description="Phenylalanine amide" evidence="4">
    <location>
        <position position="75"/>
    </location>
</feature>
<feature type="disulfide bond" evidence="1">
    <location>
        <begin position="49"/>
        <end position="63"/>
    </location>
</feature>
<feature type="disulfide bond" evidence="1">
    <location>
        <begin position="56"/>
        <end position="67"/>
    </location>
</feature>
<feature type="disulfide bond" evidence="1">
    <location>
        <begin position="62"/>
        <end position="72"/>
    </location>
</feature>
<feature type="sequence conflict" description="In Ref. 1; AAG60448." evidence="7" ref="1">
    <location>
        <begin position="23"/>
        <end position="25"/>
    </location>
</feature>
<sequence>MEKLTILLLVAAVLMSTQAMFQGDGEKSRKAEINFSETRKLARNKQKRCGGYSTYCEVDSECCSDNCVRSYCTLFG</sequence>
<evidence type="ECO:0000250" key="1"/>
<evidence type="ECO:0000255" key="2"/>
<evidence type="ECO:0000269" key="3">
    <source>
    </source>
</evidence>
<evidence type="ECO:0000269" key="4">
    <source>
    </source>
</evidence>
<evidence type="ECO:0000303" key="5">
    <source>
    </source>
</evidence>
<evidence type="ECO:0000303" key="6">
    <source>
    </source>
</evidence>
<evidence type="ECO:0000305" key="7"/>
<evidence type="ECO:0000305" key="8">
    <source>
    </source>
</evidence>
<organism>
    <name type="scientific">Conus textile</name>
    <name type="common">Cloth-of-gold cone</name>
    <dbReference type="NCBI Taxonomy" id="6494"/>
    <lineage>
        <taxon>Eukaryota</taxon>
        <taxon>Metazoa</taxon>
        <taxon>Spiralia</taxon>
        <taxon>Lophotrochozoa</taxon>
        <taxon>Mollusca</taxon>
        <taxon>Gastropoda</taxon>
        <taxon>Caenogastropoda</taxon>
        <taxon>Neogastropoda</taxon>
        <taxon>Conoidea</taxon>
        <taxon>Conidae</taxon>
        <taxon>Conus</taxon>
        <taxon>Cylinder</taxon>
    </lineage>
</organism>
<dbReference type="EMBL" id="AF215019">
    <property type="protein sequence ID" value="AAG60447.1"/>
    <property type="molecule type" value="mRNA"/>
</dbReference>
<dbReference type="EMBL" id="AF215020">
    <property type="protein sequence ID" value="AAG60448.1"/>
    <property type="molecule type" value="mRNA"/>
</dbReference>
<dbReference type="PIR" id="A58175">
    <property type="entry name" value="A58175"/>
</dbReference>
<dbReference type="SMR" id="P24160"/>
<dbReference type="ConoServer" id="1517">
    <property type="toxin name" value="TxVIIA"/>
</dbReference>
<dbReference type="ConoServer" id="706">
    <property type="toxin name" value="TxVIIA precursor"/>
</dbReference>
<dbReference type="ConoServer" id="707">
    <property type="toxin name" value="TxVIIA precursor"/>
</dbReference>
<dbReference type="GO" id="GO:0005576">
    <property type="term" value="C:extracellular region"/>
    <property type="evidence" value="ECO:0007669"/>
    <property type="project" value="UniProtKB-SubCell"/>
</dbReference>
<dbReference type="GO" id="GO:0008200">
    <property type="term" value="F:ion channel inhibitor activity"/>
    <property type="evidence" value="ECO:0007669"/>
    <property type="project" value="InterPro"/>
</dbReference>
<dbReference type="GO" id="GO:0090729">
    <property type="term" value="F:toxin activity"/>
    <property type="evidence" value="ECO:0007669"/>
    <property type="project" value="UniProtKB-KW"/>
</dbReference>
<dbReference type="InterPro" id="IPR004214">
    <property type="entry name" value="Conotoxin"/>
</dbReference>
<dbReference type="Pfam" id="PF02950">
    <property type="entry name" value="Conotoxin"/>
    <property type="match status" value="1"/>
</dbReference>
<keyword id="KW-0027">Amidation</keyword>
<keyword id="KW-0165">Cleavage on pair of basic residues</keyword>
<keyword id="KW-0903">Direct protein sequencing</keyword>
<keyword id="KW-1015">Disulfide bond</keyword>
<keyword id="KW-0301">Gamma-carboxyglutamic acid</keyword>
<keyword id="KW-0872">Ion channel impairing toxin</keyword>
<keyword id="KW-0960">Knottin</keyword>
<keyword id="KW-0528">Neurotoxin</keyword>
<keyword id="KW-0964">Secreted</keyword>
<keyword id="KW-0732">Signal</keyword>
<keyword id="KW-0800">Toxin</keyword>
<name>O27A_CONTE</name>
<accession>P24160</accession>
<accession>Q9BPB5</accession>
<accession>Q9BPB6</accession>
<reference key="1">
    <citation type="journal article" date="2001" name="Mol. Biol. Evol.">
        <title>Mechanisms for evolving hypervariability: the case of conopeptides.</title>
        <authorList>
            <person name="Conticello S.G."/>
            <person name="Gilad Y."/>
            <person name="Avidan N."/>
            <person name="Ben-Asher E."/>
            <person name="Levy Z."/>
            <person name="Fainzilber M."/>
        </authorList>
    </citation>
    <scope>NUCLEOTIDE SEQUENCE [MRNA]</scope>
</reference>
<reference key="2">
    <citation type="journal article" date="1991" name="Eur. J. Biochem.">
        <title>Mollusc-specific toxins from the venom of Conus textile neovicarius.</title>
        <authorList>
            <person name="Fainzilber M."/>
            <person name="Gordon D."/>
            <person name="Hasson A."/>
            <person name="Spira M.E."/>
            <person name="Zlotkin E."/>
        </authorList>
    </citation>
    <scope>PROTEIN SEQUENCE OF 49-75</scope>
    <scope>GAMMA-CARBOXYGLUTAMATION AT GLU-57 AND GLU-61</scope>
    <scope>SUBCELLULAR LOCATION</scope>
    <source>
        <strain>Neovicarius</strain>
        <tissue>Venom</tissue>
    </source>
</reference>
<reference key="3">
    <citation type="journal article" date="1996" name="Protein Sci.">
        <title>Mass spectrometric-based revision of the structure of a cysteine-rich peptide toxin with gamma-carboxyglutamic acid, TxVIIA, from the sea snail, Conus textile.</title>
        <authorList>
            <person name="Nakamura T."/>
            <person name="Yu Z."/>
            <person name="Fainzilber M."/>
            <person name="Burlingame A.L."/>
        </authorList>
    </citation>
    <scope>SEQUENCE REVISION TO 49; 75 AND 76</scope>
    <scope>AMIDATION AT PHE-75</scope>
    <scope>MASS SPECTROMETRY</scope>
</reference>